<evidence type="ECO:0000256" key="1">
    <source>
        <dbReference type="SAM" id="MobiDB-lite"/>
    </source>
</evidence>
<protein>
    <recommendedName>
        <fullName>Uncharacterized protein HI_0973</fullName>
    </recommendedName>
</protein>
<reference key="1">
    <citation type="journal article" date="1995" name="Science">
        <title>Whole-genome random sequencing and assembly of Haemophilus influenzae Rd.</title>
        <authorList>
            <person name="Fleischmann R.D."/>
            <person name="Adams M.D."/>
            <person name="White O."/>
            <person name="Clayton R.A."/>
            <person name="Kirkness E.F."/>
            <person name="Kerlavage A.R."/>
            <person name="Bult C.J."/>
            <person name="Tomb J.-F."/>
            <person name="Dougherty B.A."/>
            <person name="Merrick J.M."/>
            <person name="McKenney K."/>
            <person name="Sutton G.G."/>
            <person name="FitzHugh W."/>
            <person name="Fields C.A."/>
            <person name="Gocayne J.D."/>
            <person name="Scott J.D."/>
            <person name="Shirley R."/>
            <person name="Liu L.-I."/>
            <person name="Glodek A."/>
            <person name="Kelley J.M."/>
            <person name="Weidman J.F."/>
            <person name="Phillips C.A."/>
            <person name="Spriggs T."/>
            <person name="Hedblom E."/>
            <person name="Cotton M.D."/>
            <person name="Utterback T.R."/>
            <person name="Hanna M.C."/>
            <person name="Nguyen D.T."/>
            <person name="Saudek D.M."/>
            <person name="Brandon R.C."/>
            <person name="Fine L.D."/>
            <person name="Fritchman J.L."/>
            <person name="Fuhrmann J.L."/>
            <person name="Geoghagen N.S.M."/>
            <person name="Gnehm C.L."/>
            <person name="McDonald L.A."/>
            <person name="Small K.V."/>
            <person name="Fraser C.M."/>
            <person name="Smith H.O."/>
            <person name="Venter J.C."/>
        </authorList>
    </citation>
    <scope>NUCLEOTIDE SEQUENCE [LARGE SCALE GENOMIC DNA]</scope>
    <source>
        <strain>ATCC 51907 / DSM 11121 / KW20 / Rd</strain>
    </source>
</reference>
<keyword id="KW-1185">Reference proteome</keyword>
<proteinExistence type="predicted"/>
<feature type="chain" id="PRO_0000077984" description="Uncharacterized protein HI_0973">
    <location>
        <begin position="1"/>
        <end position="289"/>
    </location>
</feature>
<feature type="region of interest" description="Disordered" evidence="1">
    <location>
        <begin position="25"/>
        <end position="66"/>
    </location>
</feature>
<feature type="compositionally biased region" description="Polar residues" evidence="1">
    <location>
        <begin position="33"/>
        <end position="43"/>
    </location>
</feature>
<feature type="compositionally biased region" description="Low complexity" evidence="1">
    <location>
        <begin position="44"/>
        <end position="59"/>
    </location>
</feature>
<dbReference type="EMBL" id="L42023">
    <property type="protein sequence ID" value="AAC22641.1"/>
    <property type="molecule type" value="Genomic_DNA"/>
</dbReference>
<dbReference type="PIR" id="G64105">
    <property type="entry name" value="G64105"/>
</dbReference>
<dbReference type="RefSeq" id="NP_439134.1">
    <property type="nucleotide sequence ID" value="NC_000907.1"/>
</dbReference>
<dbReference type="SMR" id="Q57133"/>
<dbReference type="STRING" id="71421.HI_0973"/>
<dbReference type="EnsemblBacteria" id="AAC22641">
    <property type="protein sequence ID" value="AAC22641"/>
    <property type="gene ID" value="HI_0973"/>
</dbReference>
<dbReference type="KEGG" id="hin:HI_0973"/>
<dbReference type="PATRIC" id="fig|71421.8.peg.1014"/>
<dbReference type="eggNOG" id="COG3266">
    <property type="taxonomic scope" value="Bacteria"/>
</dbReference>
<dbReference type="HOGENOM" id="CLU_069306_0_0_6"/>
<dbReference type="OrthoDB" id="5689800at2"/>
<dbReference type="BioCyc" id="HINF71421:G1GJ1-1014-MONOMER"/>
<dbReference type="Proteomes" id="UP000000579">
    <property type="component" value="Chromosome"/>
</dbReference>
<dbReference type="Gene3D" id="2.40.160.90">
    <property type="match status" value="1"/>
</dbReference>
<dbReference type="InterPro" id="IPR011250">
    <property type="entry name" value="OMP/PagP_b-brl"/>
</dbReference>
<dbReference type="InterPro" id="IPR054843">
    <property type="entry name" value="Slam_hemophilin_C"/>
</dbReference>
<dbReference type="InterPro" id="IPR001677">
    <property type="entry name" value="TbpB_B_D"/>
</dbReference>
<dbReference type="NCBIfam" id="NF041636">
    <property type="entry name" value="slam_lipo"/>
    <property type="match status" value="1"/>
</dbReference>
<dbReference type="Pfam" id="PF01298">
    <property type="entry name" value="TbpB_B_D"/>
    <property type="match status" value="1"/>
</dbReference>
<dbReference type="SUPFAM" id="SSF56925">
    <property type="entry name" value="OMPA-like"/>
    <property type="match status" value="1"/>
</dbReference>
<dbReference type="PROSITE" id="PS51257">
    <property type="entry name" value="PROKAR_LIPOPROTEIN"/>
    <property type="match status" value="1"/>
</dbReference>
<sequence>MTINLTKFSLTILVALTLTACGSSGGSGDSQSAHTPSTSIHTQNNSTPNKNTSTPPVNVSNANNLEIKNNDKTGGAFIISGEDGHVTLKKVDITTNSDLNVLYIDGTKIPLSSPSIKSNGWLNIRSGTGKVSIDGIETSRDLKVCCGKYTDTRIGKVLSKNKNEDTYFFYNGNLTRNMPVGGTVNYNTGDSILSSYHDELGDTDEAVGTSQFSADFVNKKLTGSLSVNEKKLNINADISGNTFSGTTQSDAFKSQGIAEGKFYGENAKELGGLVKANDNSWSGAFAAKK</sequence>
<name>Y973_HAEIN</name>
<accession>Q57133</accession>
<accession>O05038</accession>
<organism>
    <name type="scientific">Haemophilus influenzae (strain ATCC 51907 / DSM 11121 / KW20 / Rd)</name>
    <dbReference type="NCBI Taxonomy" id="71421"/>
    <lineage>
        <taxon>Bacteria</taxon>
        <taxon>Pseudomonadati</taxon>
        <taxon>Pseudomonadota</taxon>
        <taxon>Gammaproteobacteria</taxon>
        <taxon>Pasteurellales</taxon>
        <taxon>Pasteurellaceae</taxon>
        <taxon>Haemophilus</taxon>
    </lineage>
</organism>
<gene>
    <name type="ordered locus">HI_0973</name>
</gene>